<organism evidence="8">
    <name type="scientific">Arabidopsis thaliana</name>
    <name type="common">Mouse-ear cress</name>
    <dbReference type="NCBI Taxonomy" id="3702"/>
    <lineage>
        <taxon>Eukaryota</taxon>
        <taxon>Viridiplantae</taxon>
        <taxon>Streptophyta</taxon>
        <taxon>Embryophyta</taxon>
        <taxon>Tracheophyta</taxon>
        <taxon>Spermatophyta</taxon>
        <taxon>Magnoliopsida</taxon>
        <taxon>eudicotyledons</taxon>
        <taxon>Gunneridae</taxon>
        <taxon>Pentapetalae</taxon>
        <taxon>rosids</taxon>
        <taxon>malvids</taxon>
        <taxon>Brassicales</taxon>
        <taxon>Brassicaceae</taxon>
        <taxon>Camelineae</taxon>
        <taxon>Arabidopsis</taxon>
    </lineage>
</organism>
<accession>Q8LPQ1</accession>
<accession>Q9LXA2</accession>
<name>NET2C_ARATH</name>
<feature type="chain" id="PRO_0000431855" description="Protein NETWORKED 2C">
    <location>
        <begin position="1"/>
        <end position="848"/>
    </location>
</feature>
<feature type="domain" description="NAB" evidence="2">
    <location>
        <begin position="10"/>
        <end position="90"/>
    </location>
</feature>
<feature type="region of interest" description="Disordered" evidence="3">
    <location>
        <begin position="108"/>
        <end position="141"/>
    </location>
</feature>
<feature type="coiled-coil region" evidence="1">
    <location>
        <begin position="172"/>
        <end position="204"/>
    </location>
</feature>
<feature type="coiled-coil region" evidence="1">
    <location>
        <begin position="241"/>
        <end position="278"/>
    </location>
</feature>
<feature type="coiled-coil region" evidence="1">
    <location>
        <begin position="305"/>
        <end position="454"/>
    </location>
</feature>
<feature type="coiled-coil region" evidence="1">
    <location>
        <begin position="752"/>
        <end position="797"/>
    </location>
</feature>
<keyword id="KW-0175">Coiled coil</keyword>
<keyword id="KW-1185">Reference proteome</keyword>
<evidence type="ECO:0000255" key="1"/>
<evidence type="ECO:0000255" key="2">
    <source>
        <dbReference type="PROSITE-ProRule" id="PRU01110"/>
    </source>
</evidence>
<evidence type="ECO:0000256" key="3">
    <source>
        <dbReference type="SAM" id="MobiDB-lite"/>
    </source>
</evidence>
<evidence type="ECO:0000303" key="4">
    <source>
    </source>
</evidence>
<evidence type="ECO:0000305" key="5"/>
<evidence type="ECO:0000305" key="6">
    <source>
    </source>
</evidence>
<evidence type="ECO:0000312" key="7">
    <source>
        <dbReference type="Araport" id="AT5G10500"/>
    </source>
</evidence>
<evidence type="ECO:0000312" key="8">
    <source>
        <dbReference type="EMBL" id="AAM19845.1"/>
    </source>
</evidence>
<evidence type="ECO:0000312" key="9">
    <source>
        <dbReference type="EMBL" id="CAB89393.1"/>
    </source>
</evidence>
<protein>
    <recommendedName>
        <fullName evidence="4">Protein NETWORKED 2C</fullName>
    </recommendedName>
</protein>
<comment type="function">
    <text evidence="6">Plant-specific actin binding protein. May be part of a membrane-cytoskeletal adapter complex.</text>
</comment>
<comment type="similarity">
    <text evidence="5">Belongs to the NET family.</text>
</comment>
<comment type="sequence caution" evidence="5">
    <conflict type="erroneous gene model prediction">
        <sequence resource="EMBL-CDS" id="CAB89393"/>
    </conflict>
</comment>
<dbReference type="EMBL" id="AL353995">
    <property type="protein sequence ID" value="CAB89393.1"/>
    <property type="status" value="ALT_SEQ"/>
    <property type="molecule type" value="Genomic_DNA"/>
</dbReference>
<dbReference type="EMBL" id="CP002688">
    <property type="protein sequence ID" value="AED91554.1"/>
    <property type="molecule type" value="Genomic_DNA"/>
</dbReference>
<dbReference type="EMBL" id="AY094478">
    <property type="protein sequence ID" value="AAM19845.1"/>
    <property type="molecule type" value="mRNA"/>
</dbReference>
<dbReference type="EMBL" id="BT002295">
    <property type="protein sequence ID" value="AAN72306.1"/>
    <property type="molecule type" value="mRNA"/>
</dbReference>
<dbReference type="PIR" id="T49989">
    <property type="entry name" value="T49989"/>
</dbReference>
<dbReference type="RefSeq" id="NP_196612.2">
    <property type="nucleotide sequence ID" value="NM_121088.4"/>
</dbReference>
<dbReference type="SMR" id="Q8LPQ1"/>
<dbReference type="FunCoup" id="Q8LPQ1">
    <property type="interactions" value="62"/>
</dbReference>
<dbReference type="IntAct" id="Q8LPQ1">
    <property type="interactions" value="2"/>
</dbReference>
<dbReference type="STRING" id="3702.Q8LPQ1"/>
<dbReference type="PaxDb" id="3702-AT5G10500.1"/>
<dbReference type="ProteomicsDB" id="249044"/>
<dbReference type="EnsemblPlants" id="AT5G10500.1">
    <property type="protein sequence ID" value="AT5G10500.1"/>
    <property type="gene ID" value="AT5G10500"/>
</dbReference>
<dbReference type="GeneID" id="830914"/>
<dbReference type="Gramene" id="AT5G10500.1">
    <property type="protein sequence ID" value="AT5G10500.1"/>
    <property type="gene ID" value="AT5G10500"/>
</dbReference>
<dbReference type="KEGG" id="ath:AT5G10500"/>
<dbReference type="Araport" id="AT5G10500"/>
<dbReference type="TAIR" id="AT5G10500">
    <property type="gene designation" value="NET2C"/>
</dbReference>
<dbReference type="eggNOG" id="ENOG502QQVH">
    <property type="taxonomic scope" value="Eukaryota"/>
</dbReference>
<dbReference type="HOGENOM" id="CLU_004324_0_0_1"/>
<dbReference type="InParanoid" id="Q8LPQ1"/>
<dbReference type="OMA" id="QVCHFQD"/>
<dbReference type="PhylomeDB" id="Q8LPQ1"/>
<dbReference type="PRO" id="PR:Q8LPQ1"/>
<dbReference type="Proteomes" id="UP000006548">
    <property type="component" value="Chromosome 5"/>
</dbReference>
<dbReference type="ExpressionAtlas" id="Q8LPQ1">
    <property type="expression patterns" value="baseline and differential"/>
</dbReference>
<dbReference type="GO" id="GO:0016020">
    <property type="term" value="C:membrane"/>
    <property type="evidence" value="ECO:0007669"/>
    <property type="project" value="UniProtKB-ARBA"/>
</dbReference>
<dbReference type="GO" id="GO:0003779">
    <property type="term" value="F:actin binding"/>
    <property type="evidence" value="ECO:0007669"/>
    <property type="project" value="InterPro"/>
</dbReference>
<dbReference type="InterPro" id="IPR011684">
    <property type="entry name" value="NAB"/>
</dbReference>
<dbReference type="InterPro" id="IPR056889">
    <property type="entry name" value="NET2A-D/KIP1-like_C"/>
</dbReference>
<dbReference type="InterPro" id="IPR056888">
    <property type="entry name" value="NET2A-D/KIP1-like_dom"/>
</dbReference>
<dbReference type="PANTHER" id="PTHR31631:SF8">
    <property type="entry name" value="PROTEIN NETWORKED 2C"/>
    <property type="match status" value="1"/>
</dbReference>
<dbReference type="PANTHER" id="PTHR31631">
    <property type="entry name" value="PROTEIN NETWORKED 2D"/>
    <property type="match status" value="1"/>
</dbReference>
<dbReference type="Pfam" id="PF07765">
    <property type="entry name" value="KIP1"/>
    <property type="match status" value="1"/>
</dbReference>
<dbReference type="Pfam" id="PF25014">
    <property type="entry name" value="NET2A"/>
    <property type="match status" value="1"/>
</dbReference>
<dbReference type="Pfam" id="PF24918">
    <property type="entry name" value="NET2A_C"/>
    <property type="match status" value="1"/>
</dbReference>
<dbReference type="PROSITE" id="PS51774">
    <property type="entry name" value="NAB"/>
    <property type="match status" value="1"/>
</dbReference>
<proteinExistence type="evidence at transcript level"/>
<sequence>MLRRAASNAYSWWWASHVRTKQSKWLEENLQDIEEKVEYALKLLEDEGDSFAKRAEMYYKRRPELISFVEESFKAYRALAERYDHISKELQNANTTIASVFPDQVPEFAMNEDDDDDAPVSPRHHKNKTSNKNVPKVPDLPIKDPEAAKKMFMSRKAIQEQNASSVVNKSGLSKTEAVEEIDKLQKEILVLQTEKEFVKTSYENGLAKYWEIEKCIMEKQGKVSSLQDEFDEGAVVIEDKEAQILMSTTALKSCQEKLEELRDKQEQNVKEVDVSRKQISESTEEFGNLSDALLGDGKGNHEIYSEKEKLESLGEKVNDEFDDSEAKSCLTIPDVADKIDELVNDVINLENLFSSQAALIHRLREEIDDLKAQIRALQKENNSSQTDDNMDMGKKLKEMEEKVNGVKDIDQEVEEKSDNIDKHLTRAHMKLSFLSKRLKSLTQEGEDEELKATNVPIQDIGSLTDTKFPEENIDDTVVSENALDIKSASEVVFAEKDLSDEVNQEEAIETKTKEASLSDLEKHISSPKSDIITTQESSDELFLQKLLAHGIEGREKHLLTEYTKVLRNYKEVKKLLHETETKLKNVNTLKDEGKDQQRGQLFMLICREDNNATNAITGQKQRMSPNEEQLGARVDALLSENLNLLVRFSNSFGKIQQFDTGIKDLHGEMLKIIKQKNQDGGKNTLRSNVRPIYKHLSEIRTEMTVWLEKSLLLKEEINIRASTLSDIHNEITEALKTDSEDSEIKFTIYQGAKFEGEVSNMKKENNRIAEELQTGLDQVTKLMKDADTTLEKLSEEFSLSESNTQSSQDRSRIPLRSFIFDRKPKKQRLSLFSCIQPSLSKMKKPAGS</sequence>
<reference key="1">
    <citation type="journal article" date="2000" name="Nature">
        <title>Sequence and analysis of chromosome 5 of the plant Arabidopsis thaliana.</title>
        <authorList>
            <person name="Tabata S."/>
            <person name="Kaneko T."/>
            <person name="Nakamura Y."/>
            <person name="Kotani H."/>
            <person name="Kato T."/>
            <person name="Asamizu E."/>
            <person name="Miyajima N."/>
            <person name="Sasamoto S."/>
            <person name="Kimura T."/>
            <person name="Hosouchi T."/>
            <person name="Kawashima K."/>
            <person name="Kohara M."/>
            <person name="Matsumoto M."/>
            <person name="Matsuno A."/>
            <person name="Muraki A."/>
            <person name="Nakayama S."/>
            <person name="Nakazaki N."/>
            <person name="Naruo K."/>
            <person name="Okumura S."/>
            <person name="Shinpo S."/>
            <person name="Takeuchi C."/>
            <person name="Wada T."/>
            <person name="Watanabe A."/>
            <person name="Yamada M."/>
            <person name="Yasuda M."/>
            <person name="Sato S."/>
            <person name="de la Bastide M."/>
            <person name="Huang E."/>
            <person name="Spiegel L."/>
            <person name="Gnoj L."/>
            <person name="O'Shaughnessy A."/>
            <person name="Preston R."/>
            <person name="Habermann K."/>
            <person name="Murray J."/>
            <person name="Johnson D."/>
            <person name="Rohlfing T."/>
            <person name="Nelson J."/>
            <person name="Stoneking T."/>
            <person name="Pepin K."/>
            <person name="Spieth J."/>
            <person name="Sekhon M."/>
            <person name="Armstrong J."/>
            <person name="Becker M."/>
            <person name="Belter E."/>
            <person name="Cordum H."/>
            <person name="Cordes M."/>
            <person name="Courtney L."/>
            <person name="Courtney W."/>
            <person name="Dante M."/>
            <person name="Du H."/>
            <person name="Edwards J."/>
            <person name="Fryman J."/>
            <person name="Haakensen B."/>
            <person name="Lamar E."/>
            <person name="Latreille P."/>
            <person name="Leonard S."/>
            <person name="Meyer R."/>
            <person name="Mulvaney E."/>
            <person name="Ozersky P."/>
            <person name="Riley A."/>
            <person name="Strowmatt C."/>
            <person name="Wagner-McPherson C."/>
            <person name="Wollam A."/>
            <person name="Yoakum M."/>
            <person name="Bell M."/>
            <person name="Dedhia N."/>
            <person name="Parnell L."/>
            <person name="Shah R."/>
            <person name="Rodriguez M."/>
            <person name="Hoon See L."/>
            <person name="Vil D."/>
            <person name="Baker J."/>
            <person name="Kirchoff K."/>
            <person name="Toth K."/>
            <person name="King L."/>
            <person name="Bahret A."/>
            <person name="Miller B."/>
            <person name="Marra M.A."/>
            <person name="Martienssen R."/>
            <person name="McCombie W.R."/>
            <person name="Wilson R.K."/>
            <person name="Murphy G."/>
            <person name="Bancroft I."/>
            <person name="Volckaert G."/>
            <person name="Wambutt R."/>
            <person name="Duesterhoeft A."/>
            <person name="Stiekema W."/>
            <person name="Pohl T."/>
            <person name="Entian K.-D."/>
            <person name="Terryn N."/>
            <person name="Hartley N."/>
            <person name="Bent E."/>
            <person name="Johnson S."/>
            <person name="Langham S.-A."/>
            <person name="McCullagh B."/>
            <person name="Robben J."/>
            <person name="Grymonprez B."/>
            <person name="Zimmermann W."/>
            <person name="Ramsperger U."/>
            <person name="Wedler H."/>
            <person name="Balke K."/>
            <person name="Wedler E."/>
            <person name="Peters S."/>
            <person name="van Staveren M."/>
            <person name="Dirkse W."/>
            <person name="Mooijman P."/>
            <person name="Klein Lankhorst R."/>
            <person name="Weitzenegger T."/>
            <person name="Bothe G."/>
            <person name="Rose M."/>
            <person name="Hauf J."/>
            <person name="Berneiser S."/>
            <person name="Hempel S."/>
            <person name="Feldpausch M."/>
            <person name="Lamberth S."/>
            <person name="Villarroel R."/>
            <person name="Gielen J."/>
            <person name="Ardiles W."/>
            <person name="Bents O."/>
            <person name="Lemcke K."/>
            <person name="Kolesov G."/>
            <person name="Mayer K.F.X."/>
            <person name="Rudd S."/>
            <person name="Schoof H."/>
            <person name="Schueller C."/>
            <person name="Zaccaria P."/>
            <person name="Mewes H.-W."/>
            <person name="Bevan M."/>
            <person name="Fransz P.F."/>
        </authorList>
    </citation>
    <scope>NUCLEOTIDE SEQUENCE [LARGE SCALE GENOMIC DNA]</scope>
    <source>
        <strain>cv. Columbia</strain>
    </source>
</reference>
<reference key="2">
    <citation type="journal article" date="2017" name="Plant J.">
        <title>Araport11: a complete reannotation of the Arabidopsis thaliana reference genome.</title>
        <authorList>
            <person name="Cheng C.Y."/>
            <person name="Krishnakumar V."/>
            <person name="Chan A.P."/>
            <person name="Thibaud-Nissen F."/>
            <person name="Schobel S."/>
            <person name="Town C.D."/>
        </authorList>
    </citation>
    <scope>GENOME REANNOTATION</scope>
    <source>
        <strain>cv. Columbia</strain>
    </source>
</reference>
<reference key="3">
    <citation type="journal article" date="2003" name="Science">
        <title>Empirical analysis of transcriptional activity in the Arabidopsis genome.</title>
        <authorList>
            <person name="Yamada K."/>
            <person name="Lim J."/>
            <person name="Dale J.M."/>
            <person name="Chen H."/>
            <person name="Shinn P."/>
            <person name="Palm C.J."/>
            <person name="Southwick A.M."/>
            <person name="Wu H.C."/>
            <person name="Kim C.J."/>
            <person name="Nguyen M."/>
            <person name="Pham P.K."/>
            <person name="Cheuk R.F."/>
            <person name="Karlin-Newmann G."/>
            <person name="Liu S.X."/>
            <person name="Lam B."/>
            <person name="Sakano H."/>
            <person name="Wu T."/>
            <person name="Yu G."/>
            <person name="Miranda M."/>
            <person name="Quach H.L."/>
            <person name="Tripp M."/>
            <person name="Chang C.H."/>
            <person name="Lee J.M."/>
            <person name="Toriumi M.J."/>
            <person name="Chan M.M."/>
            <person name="Tang C.C."/>
            <person name="Onodera C.S."/>
            <person name="Deng J.M."/>
            <person name="Akiyama K."/>
            <person name="Ansari Y."/>
            <person name="Arakawa T."/>
            <person name="Banh J."/>
            <person name="Banno F."/>
            <person name="Bowser L."/>
            <person name="Brooks S.Y."/>
            <person name="Carninci P."/>
            <person name="Chao Q."/>
            <person name="Choy N."/>
            <person name="Enju A."/>
            <person name="Goldsmith A.D."/>
            <person name="Gurjal M."/>
            <person name="Hansen N.F."/>
            <person name="Hayashizaki Y."/>
            <person name="Johnson-Hopson C."/>
            <person name="Hsuan V.W."/>
            <person name="Iida K."/>
            <person name="Karnes M."/>
            <person name="Khan S."/>
            <person name="Koesema E."/>
            <person name="Ishida J."/>
            <person name="Jiang P.X."/>
            <person name="Jones T."/>
            <person name="Kawai J."/>
            <person name="Kamiya A."/>
            <person name="Meyers C."/>
            <person name="Nakajima M."/>
            <person name="Narusaka M."/>
            <person name="Seki M."/>
            <person name="Sakurai T."/>
            <person name="Satou M."/>
            <person name="Tamse R."/>
            <person name="Vaysberg M."/>
            <person name="Wallender E.K."/>
            <person name="Wong C."/>
            <person name="Yamamura Y."/>
            <person name="Yuan S."/>
            <person name="Shinozaki K."/>
            <person name="Davis R.W."/>
            <person name="Theologis A."/>
            <person name="Ecker J.R."/>
        </authorList>
    </citation>
    <scope>NUCLEOTIDE SEQUENCE [LARGE SCALE MRNA]</scope>
    <source>
        <strain>cv. Columbia</strain>
    </source>
</reference>
<reference key="4">
    <citation type="journal article" date="2012" name="Curr. Biol.">
        <title>A superfamily of actin-binding proteins at the actin-membrane nexus of higher plants.</title>
        <authorList>
            <person name="Deeks M.J."/>
            <person name="Calcutt J.R."/>
            <person name="Ingle E.K."/>
            <person name="Hawkins T.J."/>
            <person name="Chapman S."/>
            <person name="Richardson A.C."/>
            <person name="Mentlak D.A."/>
            <person name="Dixon M.R."/>
            <person name="Cartwright F."/>
            <person name="Smertenko A.P."/>
            <person name="Oparka K."/>
            <person name="Hussey P.J."/>
        </authorList>
    </citation>
    <scope>GENE FAMILY</scope>
    <scope>NOMENCLATURE</scope>
</reference>
<reference key="5">
    <citation type="journal article" date="2014" name="Front. Plant Sci.">
        <title>The evolution of the actin binding NET superfamily.</title>
        <authorList>
            <person name="Hawkins T.J."/>
            <person name="Deeks M.J."/>
            <person name="Wang P."/>
            <person name="Hussey P.J."/>
        </authorList>
    </citation>
    <scope>GENE FAMILY</scope>
</reference>
<gene>
    <name evidence="4" type="primary">NET2C</name>
    <name evidence="7" type="ordered locus">At5g10500</name>
    <name evidence="9" type="ORF">F12B17.150</name>
</gene>